<keyword id="KW-0067">ATP-binding</keyword>
<keyword id="KW-0547">Nucleotide-binding</keyword>
<keyword id="KW-1185">Reference proteome</keyword>
<keyword id="KW-0677">Repeat</keyword>
<keyword id="KW-0813">Transport</keyword>
<sequence length="503" mass="55016">MFTATEAVPVAKVVAGNKRYPGVVALDNVNFTLNKGEVRALLGKNGAGKSTLIRMLTGSERPDSGDIWIGETRLEGDEATLTRRAAELGVRAVYQELSLVEGLTVAENLCLGQWPRRNGMIDYLQMAQDAQRCLQALGVDVSPEQLVSTLSPAQKQLVEIARVMKGEPRVVILDEPTSSLASAEVELVISAVKKMSALGVAVIYVSHRMEEIRRIASCATVMRDGQVAGDVMLENTSTHHIVSLMLGRDHVDIAPVAPQEIVDQAVLEVRALRHKPKLEDISFTLRRGEVLGIAGLLGAGRSELLKAIVGLEEYEQGEIVINGEKITRPDYGDMLKRGIGYTPENRKEAGIIPWLGVDENTVLTNRQKISANGVLQWSTIRRLTEEVMQRMTVKAASSETPIGTLSGGNQQKVVIGRWVYAASQILLLDEPTRGVDIEAKQQIYRIVRELAAEGKSVVFISSEVEELPLVCDRILLLQHGTFSQEFHAPVNVDELMSAILSVH</sequence>
<protein>
    <recommendedName>
        <fullName>Uncharacterized ABC transporter ATP-binding protein YphE</fullName>
    </recommendedName>
</protein>
<feature type="chain" id="PRO_0000093197" description="Uncharacterized ABC transporter ATP-binding protein YphE">
    <location>
        <begin position="1"/>
        <end position="503"/>
    </location>
</feature>
<feature type="domain" description="ABC transporter 1" evidence="1">
    <location>
        <begin position="8"/>
        <end position="249"/>
    </location>
</feature>
<feature type="domain" description="ABC transporter 2" evidence="1">
    <location>
        <begin position="261"/>
        <end position="499"/>
    </location>
</feature>
<feature type="binding site" evidence="1">
    <location>
        <begin position="43"/>
        <end position="50"/>
    </location>
    <ligand>
        <name>ATP</name>
        <dbReference type="ChEBI" id="CHEBI:30616"/>
    </ligand>
</feature>
<reference key="1">
    <citation type="journal article" date="1997" name="DNA Res.">
        <title>Construction of a contiguous 874-kb sequence of the Escherichia coli-K12 genome corresponding to 50.0-68.8 min on the linkage map and analysis of its sequence features.</title>
        <authorList>
            <person name="Yamamoto Y."/>
            <person name="Aiba H."/>
            <person name="Baba T."/>
            <person name="Hayashi K."/>
            <person name="Inada T."/>
            <person name="Isono K."/>
            <person name="Itoh T."/>
            <person name="Kimura S."/>
            <person name="Kitagawa M."/>
            <person name="Makino K."/>
            <person name="Miki T."/>
            <person name="Mitsuhashi N."/>
            <person name="Mizobuchi K."/>
            <person name="Mori H."/>
            <person name="Nakade S."/>
            <person name="Nakamura Y."/>
            <person name="Nashimoto H."/>
            <person name="Oshima T."/>
            <person name="Oyama S."/>
            <person name="Saito N."/>
            <person name="Sampei G."/>
            <person name="Satoh Y."/>
            <person name="Sivasundaram S."/>
            <person name="Tagami H."/>
            <person name="Takahashi H."/>
            <person name="Takeda J."/>
            <person name="Takemoto K."/>
            <person name="Uehara K."/>
            <person name="Wada C."/>
            <person name="Yamagata S."/>
            <person name="Horiuchi T."/>
        </authorList>
    </citation>
    <scope>NUCLEOTIDE SEQUENCE [LARGE SCALE GENOMIC DNA]</scope>
    <source>
        <strain>K12 / W3110 / ATCC 27325 / DSM 5911</strain>
    </source>
</reference>
<reference key="2">
    <citation type="journal article" date="1997" name="Science">
        <title>The complete genome sequence of Escherichia coli K-12.</title>
        <authorList>
            <person name="Blattner F.R."/>
            <person name="Plunkett G. III"/>
            <person name="Bloch C.A."/>
            <person name="Perna N.T."/>
            <person name="Burland V."/>
            <person name="Riley M."/>
            <person name="Collado-Vides J."/>
            <person name="Glasner J.D."/>
            <person name="Rode C.K."/>
            <person name="Mayhew G.F."/>
            <person name="Gregor J."/>
            <person name="Davis N.W."/>
            <person name="Kirkpatrick H.A."/>
            <person name="Goeden M.A."/>
            <person name="Rose D.J."/>
            <person name="Mau B."/>
            <person name="Shao Y."/>
        </authorList>
    </citation>
    <scope>NUCLEOTIDE SEQUENCE [LARGE SCALE GENOMIC DNA]</scope>
    <source>
        <strain>K12 / MG1655 / ATCC 47076</strain>
    </source>
</reference>
<reference key="3">
    <citation type="journal article" date="2006" name="Mol. Syst. Biol.">
        <title>Highly accurate genome sequences of Escherichia coli K-12 strains MG1655 and W3110.</title>
        <authorList>
            <person name="Hayashi K."/>
            <person name="Morooka N."/>
            <person name="Yamamoto Y."/>
            <person name="Fujita K."/>
            <person name="Isono K."/>
            <person name="Choi S."/>
            <person name="Ohtsubo E."/>
            <person name="Baba T."/>
            <person name="Wanner B.L."/>
            <person name="Mori H."/>
            <person name="Horiuchi T."/>
        </authorList>
    </citation>
    <scope>NUCLEOTIDE SEQUENCE [LARGE SCALE GENOMIC DNA]</scope>
    <source>
        <strain>K12 / W3110 / ATCC 27325 / DSM 5911</strain>
    </source>
</reference>
<gene>
    <name type="primary">yphE</name>
    <name type="ordered locus">b2547</name>
    <name type="ordered locus">JW2531</name>
</gene>
<proteinExistence type="inferred from homology"/>
<accession>P77509</accession>
<dbReference type="EMBL" id="U00096">
    <property type="protein sequence ID" value="AAC75600.1"/>
    <property type="molecule type" value="Genomic_DNA"/>
</dbReference>
<dbReference type="EMBL" id="AP009048">
    <property type="protein sequence ID" value="BAA16449.1"/>
    <property type="molecule type" value="Genomic_DNA"/>
</dbReference>
<dbReference type="PIR" id="B65032">
    <property type="entry name" value="B65032"/>
</dbReference>
<dbReference type="RefSeq" id="NP_417042.1">
    <property type="nucleotide sequence ID" value="NC_000913.3"/>
</dbReference>
<dbReference type="RefSeq" id="WP_000493470.1">
    <property type="nucleotide sequence ID" value="NZ_LN832404.1"/>
</dbReference>
<dbReference type="SMR" id="P77509"/>
<dbReference type="BioGRID" id="4261315">
    <property type="interactions" value="148"/>
</dbReference>
<dbReference type="ComplexPortal" id="CPX-4468">
    <property type="entry name" value="YphDEF ABC transporter complex"/>
</dbReference>
<dbReference type="DIP" id="DIP-12830N"/>
<dbReference type="FunCoup" id="P77509">
    <property type="interactions" value="213"/>
</dbReference>
<dbReference type="IntAct" id="P77509">
    <property type="interactions" value="7"/>
</dbReference>
<dbReference type="STRING" id="511145.b2547"/>
<dbReference type="TCDB" id="3.A.1.2.27">
    <property type="family name" value="the atp-binding cassette (abc) superfamily"/>
</dbReference>
<dbReference type="PaxDb" id="511145-b2547"/>
<dbReference type="EnsemblBacteria" id="AAC75600">
    <property type="protein sequence ID" value="AAC75600"/>
    <property type="gene ID" value="b2547"/>
</dbReference>
<dbReference type="GeneID" id="948990"/>
<dbReference type="KEGG" id="ecj:JW2531"/>
<dbReference type="KEGG" id="eco:b2547"/>
<dbReference type="KEGG" id="ecoc:C3026_14105"/>
<dbReference type="PATRIC" id="fig|1411691.4.peg.4187"/>
<dbReference type="EchoBASE" id="EB3239"/>
<dbReference type="eggNOG" id="COG1129">
    <property type="taxonomic scope" value="Bacteria"/>
</dbReference>
<dbReference type="HOGENOM" id="CLU_000604_92_3_6"/>
<dbReference type="InParanoid" id="P77509"/>
<dbReference type="OMA" id="KTYAQPV"/>
<dbReference type="OrthoDB" id="9776369at2"/>
<dbReference type="PhylomeDB" id="P77509"/>
<dbReference type="BioCyc" id="EcoCyc:YPHE-MONOMER"/>
<dbReference type="PRO" id="PR:P77509"/>
<dbReference type="Proteomes" id="UP000000625">
    <property type="component" value="Chromosome"/>
</dbReference>
<dbReference type="GO" id="GO:0043190">
    <property type="term" value="C:ATP-binding cassette (ABC) transporter complex"/>
    <property type="evidence" value="ECO:0000305"/>
    <property type="project" value="EcoCyc"/>
</dbReference>
<dbReference type="GO" id="GO:0055052">
    <property type="term" value="C:ATP-binding cassette (ABC) transporter complex, substrate-binding subunit-containing"/>
    <property type="evidence" value="ECO:0000303"/>
    <property type="project" value="ComplexPortal"/>
</dbReference>
<dbReference type="GO" id="GO:0016020">
    <property type="term" value="C:membrane"/>
    <property type="evidence" value="ECO:0000303"/>
    <property type="project" value="ComplexPortal"/>
</dbReference>
<dbReference type="GO" id="GO:0005524">
    <property type="term" value="F:ATP binding"/>
    <property type="evidence" value="ECO:0007669"/>
    <property type="project" value="UniProtKB-KW"/>
</dbReference>
<dbReference type="GO" id="GO:0016887">
    <property type="term" value="F:ATP hydrolysis activity"/>
    <property type="evidence" value="ECO:0007669"/>
    <property type="project" value="InterPro"/>
</dbReference>
<dbReference type="GO" id="GO:0055085">
    <property type="term" value="P:transmembrane transport"/>
    <property type="evidence" value="ECO:0000303"/>
    <property type="project" value="ComplexPortal"/>
</dbReference>
<dbReference type="CDD" id="cd03216">
    <property type="entry name" value="ABC_Carb_Monos_I"/>
    <property type="match status" value="1"/>
</dbReference>
<dbReference type="CDD" id="cd03215">
    <property type="entry name" value="ABC_Carb_Monos_II"/>
    <property type="match status" value="1"/>
</dbReference>
<dbReference type="Gene3D" id="3.40.50.300">
    <property type="entry name" value="P-loop containing nucleotide triphosphate hydrolases"/>
    <property type="match status" value="2"/>
</dbReference>
<dbReference type="InterPro" id="IPR003593">
    <property type="entry name" value="AAA+_ATPase"/>
</dbReference>
<dbReference type="InterPro" id="IPR050107">
    <property type="entry name" value="ABC_carbohydrate_import_ATPase"/>
</dbReference>
<dbReference type="InterPro" id="IPR003439">
    <property type="entry name" value="ABC_transporter-like_ATP-bd"/>
</dbReference>
<dbReference type="InterPro" id="IPR017871">
    <property type="entry name" value="ABC_transporter-like_CS"/>
</dbReference>
<dbReference type="InterPro" id="IPR027417">
    <property type="entry name" value="P-loop_NTPase"/>
</dbReference>
<dbReference type="PANTHER" id="PTHR43790">
    <property type="entry name" value="CARBOHYDRATE TRANSPORT ATP-BINDING PROTEIN MG119-RELATED"/>
    <property type="match status" value="1"/>
</dbReference>
<dbReference type="PANTHER" id="PTHR43790:SF9">
    <property type="entry name" value="GALACTOFURANOSE TRANSPORTER ATP-BINDING PROTEIN YTFR"/>
    <property type="match status" value="1"/>
</dbReference>
<dbReference type="Pfam" id="PF00005">
    <property type="entry name" value="ABC_tran"/>
    <property type="match status" value="2"/>
</dbReference>
<dbReference type="SMART" id="SM00382">
    <property type="entry name" value="AAA"/>
    <property type="match status" value="2"/>
</dbReference>
<dbReference type="SUPFAM" id="SSF52540">
    <property type="entry name" value="P-loop containing nucleoside triphosphate hydrolases"/>
    <property type="match status" value="2"/>
</dbReference>
<dbReference type="PROSITE" id="PS00211">
    <property type="entry name" value="ABC_TRANSPORTER_1"/>
    <property type="match status" value="1"/>
</dbReference>
<dbReference type="PROSITE" id="PS50893">
    <property type="entry name" value="ABC_TRANSPORTER_2"/>
    <property type="match status" value="2"/>
</dbReference>
<evidence type="ECO:0000255" key="1">
    <source>
        <dbReference type="PROSITE-ProRule" id="PRU00434"/>
    </source>
</evidence>
<evidence type="ECO:0000305" key="2"/>
<name>YPHE_ECOLI</name>
<comment type="function">
    <text>Probably part of a binding-protein-dependent transport system YphDEF. Probably responsible for energy coupling to the transport system.</text>
</comment>
<comment type="similarity">
    <text evidence="2">Belongs to the ABC transporter superfamily.</text>
</comment>
<organism>
    <name type="scientific">Escherichia coli (strain K12)</name>
    <dbReference type="NCBI Taxonomy" id="83333"/>
    <lineage>
        <taxon>Bacteria</taxon>
        <taxon>Pseudomonadati</taxon>
        <taxon>Pseudomonadota</taxon>
        <taxon>Gammaproteobacteria</taxon>
        <taxon>Enterobacterales</taxon>
        <taxon>Enterobacteriaceae</taxon>
        <taxon>Escherichia</taxon>
    </lineage>
</organism>